<geneLocation type="mitochondrion"/>
<dbReference type="EC" id="7.1.1.9"/>
<dbReference type="EMBL" id="U36783">
    <property type="protein sequence ID" value="AAC47099.1"/>
    <property type="molecule type" value="Genomic_DNA"/>
</dbReference>
<dbReference type="EMBL" id="AF000023">
    <property type="protein sequence ID" value="AAC04630.1"/>
    <property type="molecule type" value="Genomic_DNA"/>
</dbReference>
<dbReference type="PIR" id="T11884">
    <property type="entry name" value="T11884"/>
</dbReference>
<dbReference type="SMR" id="Q35101"/>
<dbReference type="CTD" id="4512"/>
<dbReference type="UniPathway" id="UPA00705"/>
<dbReference type="GO" id="GO:0005743">
    <property type="term" value="C:mitochondrial inner membrane"/>
    <property type="evidence" value="ECO:0007669"/>
    <property type="project" value="UniProtKB-SubCell"/>
</dbReference>
<dbReference type="GO" id="GO:0045277">
    <property type="term" value="C:respiratory chain complex IV"/>
    <property type="evidence" value="ECO:0007669"/>
    <property type="project" value="InterPro"/>
</dbReference>
<dbReference type="GO" id="GO:0004129">
    <property type="term" value="F:cytochrome-c oxidase activity"/>
    <property type="evidence" value="ECO:0007669"/>
    <property type="project" value="UniProtKB-EC"/>
</dbReference>
<dbReference type="GO" id="GO:0020037">
    <property type="term" value="F:heme binding"/>
    <property type="evidence" value="ECO:0007669"/>
    <property type="project" value="InterPro"/>
</dbReference>
<dbReference type="GO" id="GO:0046872">
    <property type="term" value="F:metal ion binding"/>
    <property type="evidence" value="ECO:0007669"/>
    <property type="project" value="UniProtKB-KW"/>
</dbReference>
<dbReference type="GO" id="GO:0015990">
    <property type="term" value="P:electron transport coupled proton transport"/>
    <property type="evidence" value="ECO:0007669"/>
    <property type="project" value="InterPro"/>
</dbReference>
<dbReference type="GO" id="GO:0006123">
    <property type="term" value="P:mitochondrial electron transport, cytochrome c to oxygen"/>
    <property type="evidence" value="ECO:0007669"/>
    <property type="project" value="TreeGrafter"/>
</dbReference>
<dbReference type="CDD" id="cd01663">
    <property type="entry name" value="Cyt_c_Oxidase_I"/>
    <property type="match status" value="1"/>
</dbReference>
<dbReference type="FunFam" id="1.20.210.10:FF:000001">
    <property type="entry name" value="Cytochrome c oxidase subunit 1"/>
    <property type="match status" value="1"/>
</dbReference>
<dbReference type="Gene3D" id="1.20.210.10">
    <property type="entry name" value="Cytochrome c oxidase-like, subunit I domain"/>
    <property type="match status" value="1"/>
</dbReference>
<dbReference type="InterPro" id="IPR023616">
    <property type="entry name" value="Cyt_c_oxase-like_su1_dom"/>
</dbReference>
<dbReference type="InterPro" id="IPR036927">
    <property type="entry name" value="Cyt_c_oxase-like_su1_sf"/>
</dbReference>
<dbReference type="InterPro" id="IPR000883">
    <property type="entry name" value="Cyt_C_Oxase_1"/>
</dbReference>
<dbReference type="InterPro" id="IPR023615">
    <property type="entry name" value="Cyt_c_Oxase_su1_BS"/>
</dbReference>
<dbReference type="InterPro" id="IPR033944">
    <property type="entry name" value="Cyt_c_oxase_su1_dom"/>
</dbReference>
<dbReference type="InterPro" id="IPR014241">
    <property type="entry name" value="Cyt_c_oxidase_su1_bac"/>
</dbReference>
<dbReference type="NCBIfam" id="TIGR02891">
    <property type="entry name" value="CtaD_CoxA"/>
    <property type="match status" value="1"/>
</dbReference>
<dbReference type="PANTHER" id="PTHR10422">
    <property type="entry name" value="CYTOCHROME C OXIDASE SUBUNIT 1"/>
    <property type="match status" value="1"/>
</dbReference>
<dbReference type="PANTHER" id="PTHR10422:SF18">
    <property type="entry name" value="CYTOCHROME C OXIDASE SUBUNIT 1"/>
    <property type="match status" value="1"/>
</dbReference>
<dbReference type="Pfam" id="PF00115">
    <property type="entry name" value="COX1"/>
    <property type="match status" value="1"/>
</dbReference>
<dbReference type="PRINTS" id="PR01165">
    <property type="entry name" value="CYCOXIDASEI"/>
</dbReference>
<dbReference type="SUPFAM" id="SSF81442">
    <property type="entry name" value="Cytochrome c oxidase subunit I-like"/>
    <property type="match status" value="1"/>
</dbReference>
<dbReference type="PROSITE" id="PS50855">
    <property type="entry name" value="COX1"/>
    <property type="match status" value="1"/>
</dbReference>
<dbReference type="PROSITE" id="PS00077">
    <property type="entry name" value="COX1_CUB"/>
    <property type="match status" value="1"/>
</dbReference>
<reference key="1">
    <citation type="journal article" date="1996" name="Proc. Natl. Acad. Sci. U.S.A.">
        <title>Two mitochondrial group I introns in a metazoan, the sea anemone Metridium senile: one intron contains genes for subunits 1 and 3 of NADH dehydrogenase.</title>
        <authorList>
            <person name="Beagley C.T."/>
            <person name="Okada N.A."/>
            <person name="Wolstenholme D.R."/>
        </authorList>
    </citation>
    <scope>NUCLEOTIDE SEQUENCE [GENOMIC DNA]</scope>
    <source>
        <strain>White morph</strain>
    </source>
</reference>
<reference key="2">
    <citation type="submission" date="1997-04" db="EMBL/GenBank/DDBJ databases">
        <authorList>
            <person name="Beagley C.T."/>
            <person name="Okimoto R."/>
            <person name="Wolstenholme D.R."/>
        </authorList>
    </citation>
    <scope>NUCLEOTIDE SEQUENCE [GENOMIC DNA]</scope>
    <source>
        <strain>White morph</strain>
    </source>
</reference>
<name>COX1_METSE</name>
<gene>
    <name type="primary">COI</name>
</gene>
<protein>
    <recommendedName>
        <fullName>Cytochrome c oxidase subunit 1</fullName>
        <ecNumber>7.1.1.9</ecNumber>
    </recommendedName>
    <alternativeName>
        <fullName>Cytochrome c oxidase polypeptide I</fullName>
    </alternativeName>
</protein>
<organism>
    <name type="scientific">Metridium senile</name>
    <name type="common">Brown sea anemone</name>
    <name type="synonym">Frilled sea anemone</name>
    <dbReference type="NCBI Taxonomy" id="6116"/>
    <lineage>
        <taxon>Eukaryota</taxon>
        <taxon>Metazoa</taxon>
        <taxon>Cnidaria</taxon>
        <taxon>Anthozoa</taxon>
        <taxon>Hexacorallia</taxon>
        <taxon>Actiniaria</taxon>
        <taxon>Nynantheae</taxon>
        <taxon>Metridiidae</taxon>
        <taxon>Metridium</taxon>
    </lineage>
</organism>
<evidence type="ECO:0000250" key="1">
    <source>
        <dbReference type="UniProtKB" id="P00396"/>
    </source>
</evidence>
<evidence type="ECO:0000250" key="2">
    <source>
        <dbReference type="UniProtKB" id="P00401"/>
    </source>
</evidence>
<evidence type="ECO:0000255" key="3"/>
<evidence type="ECO:0000305" key="4"/>
<accession>Q35101</accession>
<sequence length="530" mass="58770">MDNKFLTRWVFSTNHKDIGTLYLVFGIGSGMIGTALSMLIRLELSAPGTMLGDDHLYNVIVTAHAFIMIFFLVMPVMIGGFGNWLVPLYIGAPDMAFPRLNNISFWLLPPALILLLGSAFVEQGVGTGWTVYPPLSAIQAHSGGAVDMAIFSLHLAGASSILGAMNFITTIFNMRAPGMTMDRLPLFVWSILITAFLLLLSLPVLAGAITMLLTDRNFNTTFFDPAGGGDPILFQHLFWFFGHPEVYILILPGFGMVSQIIPTFSAKNQIFGYLGMVYAMLSIGILGFIVWAHHMFTVGMDVDTRAYFTAATMIIAVPTGIKVFSWLATIYGGAVRLDTPMLWAIGFVFLFTIGGLTGVILANSSLDIVLHDTYYVVAHFHYVLSMGAIFAIFAGFYFWFGKITGYCYNELYGKIHFWIMFIGVNLTFFPQHFLGLAGFPRRYSDFVDGFAGWNLVSSLGSTISIVGVIWFVFIVYDAYVREIKFIGWVENTGASWSSLEWVQPSPPMSHTYNELPFVYGSYSALRPRNS</sequence>
<proteinExistence type="inferred from homology"/>
<comment type="function">
    <text evidence="2">Component of the cytochrome c oxidase, the last enzyme in the mitochondrial electron transport chain which drives oxidative phosphorylation. The respiratory chain contains 3 multisubunit complexes succinate dehydrogenase (complex II, CII), ubiquinol-cytochrome c oxidoreductase (cytochrome b-c1 complex, complex III, CIII) and cytochrome c oxidase (complex IV, CIV), that cooperate to transfer electrons derived from NADH and succinate to molecular oxygen, creating an electrochemical gradient over the inner membrane that drives transmembrane transport and the ATP synthase. Cytochrome c oxidase is the component of the respiratory chain that catalyzes the reduction of oxygen to water. Electrons originating from reduced cytochrome c in the intermembrane space (IMS) are transferred via the dinuclear copper A center (CU(A)) of subunit 2 and heme A of subunit 1 to the active site in subunit 1, a binuclear center (BNC) formed by heme A3 and copper B (CU(B)). The BNC reduces molecular oxygen to 2 water molecules using 4 electrons from cytochrome c in the IMS and 4 protons from the mitochondrial matrix.</text>
</comment>
<comment type="catalytic activity">
    <reaction evidence="2">
        <text>4 Fe(II)-[cytochrome c] + O2 + 8 H(+)(in) = 4 Fe(III)-[cytochrome c] + 2 H2O + 4 H(+)(out)</text>
        <dbReference type="Rhea" id="RHEA:11436"/>
        <dbReference type="Rhea" id="RHEA-COMP:10350"/>
        <dbReference type="Rhea" id="RHEA-COMP:14399"/>
        <dbReference type="ChEBI" id="CHEBI:15377"/>
        <dbReference type="ChEBI" id="CHEBI:15378"/>
        <dbReference type="ChEBI" id="CHEBI:15379"/>
        <dbReference type="ChEBI" id="CHEBI:29033"/>
        <dbReference type="ChEBI" id="CHEBI:29034"/>
        <dbReference type="EC" id="7.1.1.9"/>
    </reaction>
    <physiologicalReaction direction="left-to-right" evidence="2">
        <dbReference type="Rhea" id="RHEA:11437"/>
    </physiologicalReaction>
</comment>
<comment type="cofactor">
    <cofactor evidence="2">
        <name>heme</name>
        <dbReference type="ChEBI" id="CHEBI:30413"/>
    </cofactor>
    <text evidence="2">Binds 2 heme A groups non-covalently per subunit.</text>
</comment>
<comment type="cofactor">
    <cofactor evidence="2">
        <name>Cu cation</name>
        <dbReference type="ChEBI" id="CHEBI:23378"/>
    </cofactor>
    <text evidence="2">Binds a copper B center.</text>
</comment>
<comment type="pathway">
    <text evidence="2">Energy metabolism; oxidative phosphorylation.</text>
</comment>
<comment type="subunit">
    <text evidence="2">Component of the cytochrome c oxidase (complex IV, CIV), a multisubunit enzyme composed of a catalytic core of 3 subunits and several supernumerary subunits. The complex exists as a monomer or a dimer and forms supercomplexes (SCs) in the inner mitochondrial membrane with ubiquinol-cytochrome c oxidoreductase (cytochrome b-c1 complex, complex III, CIII).</text>
</comment>
<comment type="subcellular location">
    <subcellularLocation>
        <location evidence="2">Mitochondrion inner membrane</location>
        <topology evidence="2">Multi-pass membrane protein</topology>
    </subcellularLocation>
</comment>
<comment type="similarity">
    <text evidence="4">Belongs to the heme-copper respiratory oxidase family.</text>
</comment>
<feature type="chain" id="PRO_0000183362" description="Cytochrome c oxidase subunit 1">
    <location>
        <begin position="1"/>
        <end position="530"/>
    </location>
</feature>
<feature type="transmembrane region" description="Helical" evidence="3">
    <location>
        <begin position="20"/>
        <end position="40"/>
    </location>
</feature>
<feature type="transmembrane region" description="Helical" evidence="3">
    <location>
        <begin position="59"/>
        <end position="79"/>
    </location>
</feature>
<feature type="transmembrane region" description="Helical" evidence="3">
    <location>
        <begin position="105"/>
        <end position="125"/>
    </location>
</feature>
<feature type="transmembrane region" description="Helical" evidence="3">
    <location>
        <begin position="148"/>
        <end position="168"/>
    </location>
</feature>
<feature type="transmembrane region" description="Helical" evidence="3">
    <location>
        <begin position="186"/>
        <end position="206"/>
    </location>
</feature>
<feature type="transmembrane region" description="Helical" evidence="3">
    <location>
        <begin position="237"/>
        <end position="257"/>
    </location>
</feature>
<feature type="transmembrane region" description="Helical" evidence="3">
    <location>
        <begin position="270"/>
        <end position="290"/>
    </location>
</feature>
<feature type="transmembrane region" description="Helical" evidence="3">
    <location>
        <begin position="313"/>
        <end position="333"/>
    </location>
</feature>
<feature type="transmembrane region" description="Helical" evidence="3">
    <location>
        <begin position="341"/>
        <end position="361"/>
    </location>
</feature>
<feature type="transmembrane region" description="Helical" evidence="3">
    <location>
        <begin position="380"/>
        <end position="400"/>
    </location>
</feature>
<feature type="transmembrane region" description="Helical" evidence="3">
    <location>
        <begin position="417"/>
        <end position="437"/>
    </location>
</feature>
<feature type="transmembrane region" description="Helical" evidence="3">
    <location>
        <begin position="455"/>
        <end position="475"/>
    </location>
</feature>
<feature type="binding site" evidence="2">
    <location>
        <position position="43"/>
    </location>
    <ligand>
        <name>Ca(2+)</name>
        <dbReference type="ChEBI" id="CHEBI:29108"/>
    </ligand>
</feature>
<feature type="binding site" evidence="2">
    <location>
        <position position="46"/>
    </location>
    <ligand>
        <name>Ca(2+)</name>
        <dbReference type="ChEBI" id="CHEBI:29108"/>
    </ligand>
</feature>
<feature type="binding site" evidence="2">
    <location>
        <position position="48"/>
    </location>
    <ligand>
        <name>Ca(2+)</name>
        <dbReference type="ChEBI" id="CHEBI:29108"/>
    </ligand>
</feature>
<feature type="binding site" description="axial binding residue" evidence="2">
    <location>
        <position position="64"/>
    </location>
    <ligand>
        <name>Fe(II)-heme a</name>
        <dbReference type="ChEBI" id="CHEBI:61715"/>
        <note>low-spin</note>
    </ligand>
    <ligandPart>
        <name>Fe</name>
        <dbReference type="ChEBI" id="CHEBI:18248"/>
    </ligandPart>
</feature>
<feature type="binding site" evidence="2">
    <location>
        <position position="243"/>
    </location>
    <ligand>
        <name>Cu cation</name>
        <dbReference type="ChEBI" id="CHEBI:23378"/>
        <label>B</label>
    </ligand>
</feature>
<feature type="binding site" evidence="1">
    <location>
        <position position="247"/>
    </location>
    <ligand>
        <name>O2</name>
        <dbReference type="ChEBI" id="CHEBI:15379"/>
    </ligand>
</feature>
<feature type="binding site" evidence="2">
    <location>
        <position position="293"/>
    </location>
    <ligand>
        <name>Cu cation</name>
        <dbReference type="ChEBI" id="CHEBI:23378"/>
        <label>B</label>
    </ligand>
</feature>
<feature type="binding site" evidence="2">
    <location>
        <position position="294"/>
    </location>
    <ligand>
        <name>Cu cation</name>
        <dbReference type="ChEBI" id="CHEBI:23378"/>
        <label>B</label>
    </ligand>
</feature>
<feature type="binding site" evidence="2">
    <location>
        <position position="371"/>
    </location>
    <ligand>
        <name>Mg(2+)</name>
        <dbReference type="ChEBI" id="CHEBI:18420"/>
        <note>ligand shared with subunit 2</note>
    </ligand>
</feature>
<feature type="binding site" evidence="2">
    <location>
        <position position="372"/>
    </location>
    <ligand>
        <name>Mg(2+)</name>
        <dbReference type="ChEBI" id="CHEBI:18420"/>
        <note>ligand shared with subunit 2</note>
    </ligand>
</feature>
<feature type="binding site" description="axial binding residue" evidence="2">
    <location>
        <position position="379"/>
    </location>
    <ligand>
        <name>heme a3</name>
        <dbReference type="ChEBI" id="CHEBI:83282"/>
        <note>high-spin</note>
    </ligand>
    <ligandPart>
        <name>Fe</name>
        <dbReference type="ChEBI" id="CHEBI:18248"/>
    </ligandPart>
</feature>
<feature type="binding site" description="axial binding residue" evidence="2">
    <location>
        <position position="381"/>
    </location>
    <ligand>
        <name>Fe(II)-heme a</name>
        <dbReference type="ChEBI" id="CHEBI:61715"/>
        <note>low-spin</note>
    </ligand>
    <ligandPart>
        <name>Fe</name>
        <dbReference type="ChEBI" id="CHEBI:18248"/>
    </ligandPart>
</feature>
<feature type="cross-link" description="1'-histidyl-3'-tyrosine (His-Tyr)" evidence="2">
    <location>
        <begin position="243"/>
        <end position="247"/>
    </location>
</feature>
<keyword id="KW-0106">Calcium</keyword>
<keyword id="KW-0186">Copper</keyword>
<keyword id="KW-0249">Electron transport</keyword>
<keyword id="KW-0349">Heme</keyword>
<keyword id="KW-0408">Iron</keyword>
<keyword id="KW-0460">Magnesium</keyword>
<keyword id="KW-0472">Membrane</keyword>
<keyword id="KW-0479">Metal-binding</keyword>
<keyword id="KW-0496">Mitochondrion</keyword>
<keyword id="KW-0999">Mitochondrion inner membrane</keyword>
<keyword id="KW-0679">Respiratory chain</keyword>
<keyword id="KW-1278">Translocase</keyword>
<keyword id="KW-0812">Transmembrane</keyword>
<keyword id="KW-1133">Transmembrane helix</keyword>
<keyword id="KW-0813">Transport</keyword>